<organism>
    <name type="scientific">Synechococcus elongatus (strain ATCC 33912 / PCC 7942 / FACHB-805)</name>
    <name type="common">Anacystis nidulans R2</name>
    <dbReference type="NCBI Taxonomy" id="1140"/>
    <lineage>
        <taxon>Bacteria</taxon>
        <taxon>Bacillati</taxon>
        <taxon>Cyanobacteriota</taxon>
        <taxon>Cyanophyceae</taxon>
        <taxon>Synechococcales</taxon>
        <taxon>Synechococcaceae</taxon>
        <taxon>Synechococcus</taxon>
    </lineage>
</organism>
<proteinExistence type="inferred from homology"/>
<dbReference type="EC" id="6.3.4.20" evidence="1"/>
<dbReference type="EMBL" id="CP000100">
    <property type="protein sequence ID" value="ABB57363.1"/>
    <property type="molecule type" value="Genomic_DNA"/>
</dbReference>
<dbReference type="RefSeq" id="WP_011242535.1">
    <property type="nucleotide sequence ID" value="NZ_JACJTX010000003.1"/>
</dbReference>
<dbReference type="SMR" id="Q31NK6"/>
<dbReference type="STRING" id="1140.Synpcc7942_1333"/>
<dbReference type="PaxDb" id="1140-Synpcc7942_1333"/>
<dbReference type="GeneID" id="72430194"/>
<dbReference type="KEGG" id="syf:Synpcc7942_1333"/>
<dbReference type="eggNOG" id="COG0603">
    <property type="taxonomic scope" value="Bacteria"/>
</dbReference>
<dbReference type="HOGENOM" id="CLU_081854_1_0_3"/>
<dbReference type="OrthoDB" id="9789567at2"/>
<dbReference type="BioCyc" id="SYNEL:SYNPCC7942_1333-MONOMER"/>
<dbReference type="UniPathway" id="UPA00391"/>
<dbReference type="Proteomes" id="UP000889800">
    <property type="component" value="Chromosome"/>
</dbReference>
<dbReference type="GO" id="GO:0005524">
    <property type="term" value="F:ATP binding"/>
    <property type="evidence" value="ECO:0007669"/>
    <property type="project" value="UniProtKB-UniRule"/>
</dbReference>
<dbReference type="GO" id="GO:0016879">
    <property type="term" value="F:ligase activity, forming carbon-nitrogen bonds"/>
    <property type="evidence" value="ECO:0007669"/>
    <property type="project" value="UniProtKB-UniRule"/>
</dbReference>
<dbReference type="GO" id="GO:0008270">
    <property type="term" value="F:zinc ion binding"/>
    <property type="evidence" value="ECO:0007669"/>
    <property type="project" value="UniProtKB-UniRule"/>
</dbReference>
<dbReference type="GO" id="GO:0008616">
    <property type="term" value="P:queuosine biosynthetic process"/>
    <property type="evidence" value="ECO:0007669"/>
    <property type="project" value="UniProtKB-UniRule"/>
</dbReference>
<dbReference type="CDD" id="cd01995">
    <property type="entry name" value="QueC-like"/>
    <property type="match status" value="1"/>
</dbReference>
<dbReference type="Gene3D" id="3.40.50.620">
    <property type="entry name" value="HUPs"/>
    <property type="match status" value="1"/>
</dbReference>
<dbReference type="HAMAP" id="MF_01633">
    <property type="entry name" value="QueC"/>
    <property type="match status" value="1"/>
</dbReference>
<dbReference type="InterPro" id="IPR018317">
    <property type="entry name" value="QueC"/>
</dbReference>
<dbReference type="InterPro" id="IPR014729">
    <property type="entry name" value="Rossmann-like_a/b/a_fold"/>
</dbReference>
<dbReference type="NCBIfam" id="TIGR00364">
    <property type="entry name" value="7-cyano-7-deazaguanine synthase QueC"/>
    <property type="match status" value="1"/>
</dbReference>
<dbReference type="PANTHER" id="PTHR42914">
    <property type="entry name" value="7-CYANO-7-DEAZAGUANINE SYNTHASE"/>
    <property type="match status" value="1"/>
</dbReference>
<dbReference type="PANTHER" id="PTHR42914:SF1">
    <property type="entry name" value="7-CYANO-7-DEAZAGUANINE SYNTHASE"/>
    <property type="match status" value="1"/>
</dbReference>
<dbReference type="Pfam" id="PF06508">
    <property type="entry name" value="QueC"/>
    <property type="match status" value="1"/>
</dbReference>
<dbReference type="PIRSF" id="PIRSF006293">
    <property type="entry name" value="ExsB"/>
    <property type="match status" value="1"/>
</dbReference>
<dbReference type="SUPFAM" id="SSF52402">
    <property type="entry name" value="Adenine nucleotide alpha hydrolases-like"/>
    <property type="match status" value="1"/>
</dbReference>
<protein>
    <recommendedName>
        <fullName evidence="1">7-cyano-7-deazaguanine synthase</fullName>
        <ecNumber evidence="1">6.3.4.20</ecNumber>
    </recommendedName>
    <alternativeName>
        <fullName evidence="1">7-cyano-7-carbaguanine synthase</fullName>
    </alternativeName>
    <alternativeName>
        <fullName evidence="1">PreQ(0) synthase</fullName>
    </alternativeName>
    <alternativeName>
        <fullName evidence="1">Queuosine biosynthesis protein QueC</fullName>
    </alternativeName>
</protein>
<feature type="chain" id="PRO_0000246948" description="7-cyano-7-deazaguanine synthase">
    <location>
        <begin position="1"/>
        <end position="231"/>
    </location>
</feature>
<feature type="binding site" evidence="1">
    <location>
        <begin position="8"/>
        <end position="18"/>
    </location>
    <ligand>
        <name>ATP</name>
        <dbReference type="ChEBI" id="CHEBI:30616"/>
    </ligand>
</feature>
<feature type="binding site" evidence="1">
    <location>
        <position position="189"/>
    </location>
    <ligand>
        <name>Zn(2+)</name>
        <dbReference type="ChEBI" id="CHEBI:29105"/>
    </ligand>
</feature>
<feature type="binding site" evidence="1">
    <location>
        <position position="197"/>
    </location>
    <ligand>
        <name>Zn(2+)</name>
        <dbReference type="ChEBI" id="CHEBI:29105"/>
    </ligand>
</feature>
<feature type="binding site" evidence="1">
    <location>
        <position position="200"/>
    </location>
    <ligand>
        <name>Zn(2+)</name>
        <dbReference type="ChEBI" id="CHEBI:29105"/>
    </ligand>
</feature>
<feature type="binding site" evidence="1">
    <location>
        <position position="203"/>
    </location>
    <ligand>
        <name>Zn(2+)</name>
        <dbReference type="ChEBI" id="CHEBI:29105"/>
    </ligand>
</feature>
<reference key="1">
    <citation type="submission" date="2005-08" db="EMBL/GenBank/DDBJ databases">
        <title>Complete sequence of chromosome 1 of Synechococcus elongatus PCC 7942.</title>
        <authorList>
            <consortium name="US DOE Joint Genome Institute"/>
            <person name="Copeland A."/>
            <person name="Lucas S."/>
            <person name="Lapidus A."/>
            <person name="Barry K."/>
            <person name="Detter J.C."/>
            <person name="Glavina T."/>
            <person name="Hammon N."/>
            <person name="Israni S."/>
            <person name="Pitluck S."/>
            <person name="Schmutz J."/>
            <person name="Larimer F."/>
            <person name="Land M."/>
            <person name="Kyrpides N."/>
            <person name="Lykidis A."/>
            <person name="Golden S."/>
            <person name="Richardson P."/>
        </authorList>
    </citation>
    <scope>NUCLEOTIDE SEQUENCE [LARGE SCALE GENOMIC DNA]</scope>
    <source>
        <strain>ATCC 33912 / PCC 7942 / FACHB-805</strain>
    </source>
</reference>
<evidence type="ECO:0000255" key="1">
    <source>
        <dbReference type="HAMAP-Rule" id="MF_01633"/>
    </source>
</evidence>
<comment type="function">
    <text evidence="1">Catalyzes the ATP-dependent conversion of 7-carboxy-7-deazaguanine (CDG) to 7-cyano-7-deazaguanine (preQ(0)).</text>
</comment>
<comment type="catalytic activity">
    <reaction evidence="1">
        <text>7-carboxy-7-deazaguanine + NH4(+) + ATP = 7-cyano-7-deazaguanine + ADP + phosphate + H2O + H(+)</text>
        <dbReference type="Rhea" id="RHEA:27982"/>
        <dbReference type="ChEBI" id="CHEBI:15377"/>
        <dbReference type="ChEBI" id="CHEBI:15378"/>
        <dbReference type="ChEBI" id="CHEBI:28938"/>
        <dbReference type="ChEBI" id="CHEBI:30616"/>
        <dbReference type="ChEBI" id="CHEBI:43474"/>
        <dbReference type="ChEBI" id="CHEBI:45075"/>
        <dbReference type="ChEBI" id="CHEBI:61036"/>
        <dbReference type="ChEBI" id="CHEBI:456216"/>
        <dbReference type="EC" id="6.3.4.20"/>
    </reaction>
</comment>
<comment type="cofactor">
    <cofactor evidence="1">
        <name>Zn(2+)</name>
        <dbReference type="ChEBI" id="CHEBI:29105"/>
    </cofactor>
    <text evidence="1">Binds 1 zinc ion per subunit.</text>
</comment>
<comment type="pathway">
    <text evidence="1">Purine metabolism; 7-cyano-7-deazaguanine biosynthesis.</text>
</comment>
<comment type="similarity">
    <text evidence="1">Belongs to the QueC family.</text>
</comment>
<keyword id="KW-0067">ATP-binding</keyword>
<keyword id="KW-0436">Ligase</keyword>
<keyword id="KW-0479">Metal-binding</keyword>
<keyword id="KW-0547">Nucleotide-binding</keyword>
<keyword id="KW-0671">Queuosine biosynthesis</keyword>
<keyword id="KW-1185">Reference proteome</keyword>
<keyword id="KW-0862">Zinc</keyword>
<accession>Q31NK6</accession>
<name>QUEC_SYNE7</name>
<gene>
    <name evidence="1" type="primary">queC</name>
    <name type="ordered locus">Synpcc7942_1333</name>
</gene>
<sequence length="231" mass="24138">MAKAVVLLSGGLDSATAAAQAIADGYEAIALSFRYGQRHVRELEAARSVAAALGINQHFFVDVNIAQWGGSSLTDAAEPLPGSGVVAGEIPSTYVPGRNTVFIALALSLAEAQQASAIYLGINAVDYSGYPDCRPDYLAAFQQLASLSSKVGVEGQAPQLVAPLIHDHKVDIVRRAVVLGVPIPATWSCYAGGAEACGRCDSCRIRDRALIEAGYPEWATAIGRSLVSLQP</sequence>